<keyword id="KW-0963">Cytoplasm</keyword>
<keyword id="KW-0592">Phosphate transport</keyword>
<keyword id="KW-1185">Reference proteome</keyword>
<keyword id="KW-0813">Transport</keyword>
<organism>
    <name type="scientific">Caulobacter vibrioides (strain ATCC 19089 / CIP 103742 / CB 15)</name>
    <name type="common">Caulobacter crescentus</name>
    <dbReference type="NCBI Taxonomy" id="190650"/>
    <lineage>
        <taxon>Bacteria</taxon>
        <taxon>Pseudomonadati</taxon>
        <taxon>Pseudomonadota</taxon>
        <taxon>Alphaproteobacteria</taxon>
        <taxon>Caulobacterales</taxon>
        <taxon>Caulobacteraceae</taxon>
        <taxon>Caulobacter</taxon>
    </lineage>
</organism>
<name>PHOU_CAUVC</name>
<protein>
    <recommendedName>
        <fullName>Phosphate-specific transport system accessory protein PhoU homolog</fullName>
        <shortName>Pst system accessory protein PhoU homolog</shortName>
    </recommendedName>
</protein>
<reference key="1">
    <citation type="journal article" date="2001" name="Proc. Natl. Acad. Sci. U.S.A.">
        <title>Complete genome sequence of Caulobacter crescentus.</title>
        <authorList>
            <person name="Nierman W.C."/>
            <person name="Feldblyum T.V."/>
            <person name="Laub M.T."/>
            <person name="Paulsen I.T."/>
            <person name="Nelson K.E."/>
            <person name="Eisen J.A."/>
            <person name="Heidelberg J.F."/>
            <person name="Alley M.R.K."/>
            <person name="Ohta N."/>
            <person name="Maddock J.R."/>
            <person name="Potocka I."/>
            <person name="Nelson W.C."/>
            <person name="Newton A."/>
            <person name="Stephens C."/>
            <person name="Phadke N.D."/>
            <person name="Ely B."/>
            <person name="DeBoy R.T."/>
            <person name="Dodson R.J."/>
            <person name="Durkin A.S."/>
            <person name="Gwinn M.L."/>
            <person name="Haft D.H."/>
            <person name="Kolonay J.F."/>
            <person name="Smit J."/>
            <person name="Craven M.B."/>
            <person name="Khouri H.M."/>
            <person name="Shetty J."/>
            <person name="Berry K.J."/>
            <person name="Utterback T.R."/>
            <person name="Tran K."/>
            <person name="Wolf A.M."/>
            <person name="Vamathevan J.J."/>
            <person name="Ermolaeva M.D."/>
            <person name="White O."/>
            <person name="Salzberg S.L."/>
            <person name="Venter J.C."/>
            <person name="Shapiro L."/>
            <person name="Fraser C.M."/>
        </authorList>
    </citation>
    <scope>NUCLEOTIDE SEQUENCE [LARGE SCALE GENOMIC DNA]</scope>
    <source>
        <strain>ATCC 19089 / CIP 103742 / CB 15</strain>
    </source>
</reference>
<comment type="function">
    <text evidence="1">Plays a role in the regulation of phosphate uptake.</text>
</comment>
<comment type="subunit">
    <text evidence="1">Homodimer.</text>
</comment>
<comment type="subcellular location">
    <subcellularLocation>
        <location evidence="1">Cytoplasm</location>
    </subcellularLocation>
</comment>
<comment type="similarity">
    <text evidence="2">Belongs to the PhoU family.</text>
</comment>
<accession>P0CAV9</accession>
<accession>Q9RFA7</accession>
<gene>
    <name type="primary">phoU</name>
    <name type="ordered locus">CC_0293</name>
</gene>
<sequence length="230" mass="25583">MTEHTVKSYGEELAHLTAEVTRMGGIAESQVADCIAAIARRDGPLAQAVVAGDERLDTLQSEIERKAFRLIALRQPMAVDLRHAVAALKISMSLERCGDMAKNIGKRALILTEADPMSALTRSIERMGKLVQGRLKDVLDAYTTSDLQRAIGVWSRDEEVDEHYNAIFRELLTYMMGDPRTINACTHLLFVAKNLERIGDHATNIAEIIHFELTGEELTSQRPKLDVLSQ</sequence>
<dbReference type="EMBL" id="AE005673">
    <property type="protein sequence ID" value="AAK22280.1"/>
    <property type="molecule type" value="Genomic_DNA"/>
</dbReference>
<dbReference type="PIR" id="D87285">
    <property type="entry name" value="D87285"/>
</dbReference>
<dbReference type="RefSeq" id="NP_419112.1">
    <property type="nucleotide sequence ID" value="NC_002696.2"/>
</dbReference>
<dbReference type="RefSeq" id="WP_010918182.1">
    <property type="nucleotide sequence ID" value="NC_002696.2"/>
</dbReference>
<dbReference type="SMR" id="P0CAV9"/>
<dbReference type="STRING" id="190650.CC_0293"/>
<dbReference type="EnsemblBacteria" id="AAK22280">
    <property type="protein sequence ID" value="AAK22280"/>
    <property type="gene ID" value="CC_0293"/>
</dbReference>
<dbReference type="KEGG" id="ccr:CC_0293"/>
<dbReference type="PATRIC" id="fig|190650.5.peg.291"/>
<dbReference type="eggNOG" id="COG0704">
    <property type="taxonomic scope" value="Bacteria"/>
</dbReference>
<dbReference type="HOGENOM" id="CLU_078518_2_1_5"/>
<dbReference type="BioCyc" id="CAULO:CC0293-MONOMER"/>
<dbReference type="Proteomes" id="UP000001816">
    <property type="component" value="Chromosome"/>
</dbReference>
<dbReference type="GO" id="GO:0005737">
    <property type="term" value="C:cytoplasm"/>
    <property type="evidence" value="ECO:0000250"/>
    <property type="project" value="UniProtKB"/>
</dbReference>
<dbReference type="GO" id="GO:0042803">
    <property type="term" value="F:protein homodimerization activity"/>
    <property type="evidence" value="ECO:0000250"/>
    <property type="project" value="UniProtKB"/>
</dbReference>
<dbReference type="GO" id="GO:0030643">
    <property type="term" value="P:intracellular phosphate ion homeostasis"/>
    <property type="evidence" value="ECO:0007669"/>
    <property type="project" value="InterPro"/>
</dbReference>
<dbReference type="GO" id="GO:0045936">
    <property type="term" value="P:negative regulation of phosphate metabolic process"/>
    <property type="evidence" value="ECO:0000250"/>
    <property type="project" value="UniProtKB"/>
</dbReference>
<dbReference type="GO" id="GO:2000186">
    <property type="term" value="P:negative regulation of phosphate transmembrane transport"/>
    <property type="evidence" value="ECO:0000250"/>
    <property type="project" value="UniProtKB"/>
</dbReference>
<dbReference type="GO" id="GO:0006817">
    <property type="term" value="P:phosphate ion transport"/>
    <property type="evidence" value="ECO:0007669"/>
    <property type="project" value="UniProtKB-KW"/>
</dbReference>
<dbReference type="FunFam" id="1.20.58.220:FF:000004">
    <property type="entry name" value="Phosphate-specific transport system accessory protein PhoU"/>
    <property type="match status" value="1"/>
</dbReference>
<dbReference type="Gene3D" id="1.20.58.220">
    <property type="entry name" value="Phosphate transport system protein phou homolog 2, domain 2"/>
    <property type="match status" value="1"/>
</dbReference>
<dbReference type="InterPro" id="IPR028366">
    <property type="entry name" value="P_transport_PhoU"/>
</dbReference>
<dbReference type="InterPro" id="IPR038078">
    <property type="entry name" value="PhoU-like_sf"/>
</dbReference>
<dbReference type="InterPro" id="IPR026022">
    <property type="entry name" value="PhoU_dom"/>
</dbReference>
<dbReference type="NCBIfam" id="TIGR02135">
    <property type="entry name" value="phoU_full"/>
    <property type="match status" value="1"/>
</dbReference>
<dbReference type="PANTHER" id="PTHR42930">
    <property type="entry name" value="PHOSPHATE-SPECIFIC TRANSPORT SYSTEM ACCESSORY PROTEIN PHOU"/>
    <property type="match status" value="1"/>
</dbReference>
<dbReference type="PANTHER" id="PTHR42930:SF3">
    <property type="entry name" value="PHOSPHATE-SPECIFIC TRANSPORT SYSTEM ACCESSORY PROTEIN PHOU"/>
    <property type="match status" value="1"/>
</dbReference>
<dbReference type="Pfam" id="PF01895">
    <property type="entry name" value="PhoU"/>
    <property type="match status" value="2"/>
</dbReference>
<dbReference type="PIRSF" id="PIRSF003107">
    <property type="entry name" value="PhoU"/>
    <property type="match status" value="1"/>
</dbReference>
<dbReference type="SUPFAM" id="SSF109755">
    <property type="entry name" value="PhoU-like"/>
    <property type="match status" value="1"/>
</dbReference>
<proteinExistence type="inferred from homology"/>
<feature type="chain" id="PRO_0000155166" description="Phosphate-specific transport system accessory protein PhoU homolog">
    <location>
        <begin position="1"/>
        <end position="230"/>
    </location>
</feature>
<evidence type="ECO:0000250" key="1"/>
<evidence type="ECO:0000305" key="2"/>